<protein>
    <recommendedName>
        <fullName evidence="1">ATP synthase subunit a</fullName>
    </recommendedName>
    <alternativeName>
        <fullName evidence="1">ATP synthase F0 sector subunit a</fullName>
    </alternativeName>
    <alternativeName>
        <fullName evidence="1">F-ATPase subunit 6</fullName>
    </alternativeName>
</protein>
<gene>
    <name evidence="1" type="primary">atpB</name>
    <name type="ordered locus">lwe2483</name>
</gene>
<organism>
    <name type="scientific">Listeria welshimeri serovar 6b (strain ATCC 35897 / DSM 20650 / CCUG 15529 / CIP 8149 / NCTC 11857 / SLCC 5334 / V8)</name>
    <dbReference type="NCBI Taxonomy" id="386043"/>
    <lineage>
        <taxon>Bacteria</taxon>
        <taxon>Bacillati</taxon>
        <taxon>Bacillota</taxon>
        <taxon>Bacilli</taxon>
        <taxon>Bacillales</taxon>
        <taxon>Listeriaceae</taxon>
        <taxon>Listeria</taxon>
    </lineage>
</organism>
<name>ATP6_LISW6</name>
<dbReference type="EMBL" id="AM263198">
    <property type="protein sequence ID" value="CAK21901.1"/>
    <property type="molecule type" value="Genomic_DNA"/>
</dbReference>
<dbReference type="RefSeq" id="WP_011703213.1">
    <property type="nucleotide sequence ID" value="NC_008555.1"/>
</dbReference>
<dbReference type="SMR" id="A0ALL9"/>
<dbReference type="STRING" id="386043.lwe2483"/>
<dbReference type="GeneID" id="61190402"/>
<dbReference type="KEGG" id="lwe:lwe2483"/>
<dbReference type="eggNOG" id="COG0356">
    <property type="taxonomic scope" value="Bacteria"/>
</dbReference>
<dbReference type="HOGENOM" id="CLU_041018_2_3_9"/>
<dbReference type="OrthoDB" id="9789241at2"/>
<dbReference type="Proteomes" id="UP000000779">
    <property type="component" value="Chromosome"/>
</dbReference>
<dbReference type="GO" id="GO:0005886">
    <property type="term" value="C:plasma membrane"/>
    <property type="evidence" value="ECO:0007669"/>
    <property type="project" value="UniProtKB-SubCell"/>
</dbReference>
<dbReference type="GO" id="GO:0045259">
    <property type="term" value="C:proton-transporting ATP synthase complex"/>
    <property type="evidence" value="ECO:0007669"/>
    <property type="project" value="UniProtKB-KW"/>
</dbReference>
<dbReference type="GO" id="GO:0046933">
    <property type="term" value="F:proton-transporting ATP synthase activity, rotational mechanism"/>
    <property type="evidence" value="ECO:0007669"/>
    <property type="project" value="UniProtKB-UniRule"/>
</dbReference>
<dbReference type="GO" id="GO:0042777">
    <property type="term" value="P:proton motive force-driven plasma membrane ATP synthesis"/>
    <property type="evidence" value="ECO:0007669"/>
    <property type="project" value="TreeGrafter"/>
</dbReference>
<dbReference type="CDD" id="cd00310">
    <property type="entry name" value="ATP-synt_Fo_a_6"/>
    <property type="match status" value="1"/>
</dbReference>
<dbReference type="FunFam" id="1.20.120.220:FF:000005">
    <property type="entry name" value="ATP synthase subunit a"/>
    <property type="match status" value="1"/>
</dbReference>
<dbReference type="Gene3D" id="1.20.120.220">
    <property type="entry name" value="ATP synthase, F0 complex, subunit A"/>
    <property type="match status" value="1"/>
</dbReference>
<dbReference type="HAMAP" id="MF_01393">
    <property type="entry name" value="ATP_synth_a_bact"/>
    <property type="match status" value="1"/>
</dbReference>
<dbReference type="InterPro" id="IPR045082">
    <property type="entry name" value="ATP_syn_F0_a_bact/chloroplast"/>
</dbReference>
<dbReference type="InterPro" id="IPR000568">
    <property type="entry name" value="ATP_synth_F0_asu"/>
</dbReference>
<dbReference type="InterPro" id="IPR023011">
    <property type="entry name" value="ATP_synth_F0_asu_AS"/>
</dbReference>
<dbReference type="InterPro" id="IPR035908">
    <property type="entry name" value="F0_ATP_A_sf"/>
</dbReference>
<dbReference type="NCBIfam" id="TIGR01131">
    <property type="entry name" value="ATP_synt_6_or_A"/>
    <property type="match status" value="1"/>
</dbReference>
<dbReference type="NCBIfam" id="NF004479">
    <property type="entry name" value="PRK05815.1-4"/>
    <property type="match status" value="1"/>
</dbReference>
<dbReference type="PANTHER" id="PTHR42823">
    <property type="entry name" value="ATP SYNTHASE SUBUNIT A, CHLOROPLASTIC"/>
    <property type="match status" value="1"/>
</dbReference>
<dbReference type="PANTHER" id="PTHR42823:SF3">
    <property type="entry name" value="ATP SYNTHASE SUBUNIT A, CHLOROPLASTIC"/>
    <property type="match status" value="1"/>
</dbReference>
<dbReference type="Pfam" id="PF00119">
    <property type="entry name" value="ATP-synt_A"/>
    <property type="match status" value="1"/>
</dbReference>
<dbReference type="PRINTS" id="PR00123">
    <property type="entry name" value="ATPASEA"/>
</dbReference>
<dbReference type="SUPFAM" id="SSF81336">
    <property type="entry name" value="F1F0 ATP synthase subunit A"/>
    <property type="match status" value="1"/>
</dbReference>
<dbReference type="PROSITE" id="PS00449">
    <property type="entry name" value="ATPASE_A"/>
    <property type="match status" value="1"/>
</dbReference>
<keyword id="KW-0066">ATP synthesis</keyword>
<keyword id="KW-1003">Cell membrane</keyword>
<keyword id="KW-0138">CF(0)</keyword>
<keyword id="KW-0375">Hydrogen ion transport</keyword>
<keyword id="KW-0406">Ion transport</keyword>
<keyword id="KW-0472">Membrane</keyword>
<keyword id="KW-0812">Transmembrane</keyword>
<keyword id="KW-1133">Transmembrane helix</keyword>
<keyword id="KW-0813">Transport</keyword>
<feature type="chain" id="PRO_1000145288" description="ATP synthase subunit a">
    <location>
        <begin position="1"/>
        <end position="238"/>
    </location>
</feature>
<feature type="transmembrane region" description="Helical" evidence="1">
    <location>
        <begin position="17"/>
        <end position="37"/>
    </location>
</feature>
<feature type="transmembrane region" description="Helical" evidence="1">
    <location>
        <begin position="80"/>
        <end position="100"/>
    </location>
</feature>
<feature type="transmembrane region" description="Helical" evidence="1">
    <location>
        <begin position="112"/>
        <end position="132"/>
    </location>
</feature>
<feature type="transmembrane region" description="Helical" evidence="1">
    <location>
        <begin position="194"/>
        <end position="214"/>
    </location>
</feature>
<reference key="1">
    <citation type="journal article" date="2006" name="J. Bacteriol.">
        <title>Whole-genome sequence of Listeria welshimeri reveals common steps in genome reduction with Listeria innocua as compared to Listeria monocytogenes.</title>
        <authorList>
            <person name="Hain T."/>
            <person name="Steinweg C."/>
            <person name="Kuenne C.T."/>
            <person name="Billion A."/>
            <person name="Ghai R."/>
            <person name="Chatterjee S.S."/>
            <person name="Domann E."/>
            <person name="Kaerst U."/>
            <person name="Goesmann A."/>
            <person name="Bekel T."/>
            <person name="Bartels D."/>
            <person name="Kaiser O."/>
            <person name="Meyer F."/>
            <person name="Puehler A."/>
            <person name="Weisshaar B."/>
            <person name="Wehland J."/>
            <person name="Liang C."/>
            <person name="Dandekar T."/>
            <person name="Lampidis R."/>
            <person name="Kreft J."/>
            <person name="Goebel W."/>
            <person name="Chakraborty T."/>
        </authorList>
    </citation>
    <scope>NUCLEOTIDE SEQUENCE [LARGE SCALE GENOMIC DNA]</scope>
    <source>
        <strain>ATCC 35897 / DSM 20650 / CCUG 15529 / CIP 8149 / NCTC 11857 / SLCC 5334 / V8</strain>
    </source>
</reference>
<proteinExistence type="inferred from homology"/>
<sequence>MGEEFPTISLLGIDFNLSNILMITVTCVIVLLIAIICTRNLQRRPTGKQNFIEWIMDFVRGIINSNMDWKTGGRFHVLGITLLMFIFVANMLGLPFQIAINDEVWWRSPTADPIVTLTLAIMVLGLTHYYGIKMRGFKHYFVGTYFSPMKFLFPLKLVEEFANTLTLGLRLYGNIFAGEVLLTIIATQLAHMNIFVGVLAIIPALLWQGFSIFIGAIQAYIFTMLTMVYMSHKVSDEH</sequence>
<evidence type="ECO:0000255" key="1">
    <source>
        <dbReference type="HAMAP-Rule" id="MF_01393"/>
    </source>
</evidence>
<accession>A0ALL9</accession>
<comment type="function">
    <text evidence="1">Key component of the proton channel; it plays a direct role in the translocation of protons across the membrane.</text>
</comment>
<comment type="subunit">
    <text evidence="1">F-type ATPases have 2 components, CF(1) - the catalytic core - and CF(0) - the membrane proton channel. CF(1) has five subunits: alpha(3), beta(3), gamma(1), delta(1), epsilon(1). CF(0) has three main subunits: a(1), b(2) and c(9-12). The alpha and beta chains form an alternating ring which encloses part of the gamma chain. CF(1) is attached to CF(0) by a central stalk formed by the gamma and epsilon chains, while a peripheral stalk is formed by the delta and b chains.</text>
</comment>
<comment type="subcellular location">
    <subcellularLocation>
        <location evidence="1">Cell membrane</location>
        <topology evidence="1">Multi-pass membrane protein</topology>
    </subcellularLocation>
</comment>
<comment type="similarity">
    <text evidence="1">Belongs to the ATPase A chain family.</text>
</comment>